<proteinExistence type="evidence at protein level"/>
<feature type="chain" id="PRO_0000172487" description="Solute carrier family 13 member 1">
    <location>
        <begin position="1"/>
        <end position="595"/>
    </location>
</feature>
<feature type="transmembrane region" description="Helical" evidence="1">
    <location>
        <begin position="13"/>
        <end position="33"/>
    </location>
</feature>
<feature type="transmembrane region" description="Helical" evidence="1">
    <location>
        <begin position="40"/>
        <end position="60"/>
    </location>
</feature>
<feature type="transmembrane region" description="Helical" evidence="1">
    <location>
        <begin position="77"/>
        <end position="97"/>
    </location>
</feature>
<feature type="transmembrane region" description="Helical" evidence="1">
    <location>
        <begin position="113"/>
        <end position="133"/>
    </location>
</feature>
<feature type="transmembrane region" description="Helical" evidence="1">
    <location>
        <begin position="134"/>
        <end position="154"/>
    </location>
</feature>
<feature type="transmembrane region" description="Helical" evidence="1">
    <location>
        <begin position="239"/>
        <end position="259"/>
    </location>
</feature>
<feature type="transmembrane region" description="Helical" evidence="1">
    <location>
        <begin position="283"/>
        <end position="303"/>
    </location>
</feature>
<feature type="transmembrane region" description="Helical" evidence="1">
    <location>
        <begin position="348"/>
        <end position="368"/>
    </location>
</feature>
<feature type="transmembrane region" description="Helical" evidence="1">
    <location>
        <begin position="381"/>
        <end position="401"/>
    </location>
</feature>
<feature type="transmembrane region" description="Helical" evidence="1">
    <location>
        <begin position="464"/>
        <end position="484"/>
    </location>
</feature>
<feature type="transmembrane region" description="Helical" evidence="1">
    <location>
        <begin position="491"/>
        <end position="511"/>
    </location>
</feature>
<feature type="transmembrane region" description="Helical" evidence="1">
    <location>
        <begin position="512"/>
        <end position="532"/>
    </location>
</feature>
<feature type="transmembrane region" description="Helical" evidence="1">
    <location>
        <begin position="553"/>
        <end position="573"/>
    </location>
</feature>
<feature type="region of interest" description="Disordered" evidence="2">
    <location>
        <begin position="190"/>
        <end position="218"/>
    </location>
</feature>
<feature type="compositionally biased region" description="Basic and acidic residues" evidence="2">
    <location>
        <begin position="208"/>
        <end position="218"/>
    </location>
</feature>
<feature type="glycosylation site" description="N-linked (GlcNAc...) asparagine" evidence="1">
    <location>
        <position position="174"/>
    </location>
</feature>
<feature type="glycosylation site" description="N-linked (GlcNAc...) asparagine" evidence="1">
    <location>
        <position position="591"/>
    </location>
</feature>
<sequence>MKLLNYAFVYRRFLLVVFTVLVLLPLPLIIRSKEAECAYILFVIATFWITEALPLSITALLPGLMFPMFGIMSSTHVASAYFKDFHLLLIGVICLATSIEKWNLHKRIALRMVMMVGVNPAWLTLGFMSSTAFLSMWLSNTSTAAMVMPIVEAVAQQITSAEAEAEATQMTYFNESAAQGLEVDETIIGQETNERKEKTKPALGSSNDKGKVSSKMETEKNTVTGAKYRSKKDHMMCKLMCLCIAYSSTIGGLTTITGTSTNLIFSEHFNTRYPDCRCLNFGSWFLFSFPVAVILLLLSWIWLQWLFLGFNFKEMFKCGKTKTLKEKACAEVIKQEYEKLGPMRYQEIVTLVIFIVMALLWFSRDPGFVTGWSVLFSEYPGYVTDSTVALVAGILFFLIPAKKLTKMTSTGDIIAFDYSPLITWKEFQSFMPWDIAILVGGGFALADGCQVSGLSSWIGSKLSPLGSLPVWLIILISSLIVTSLTEVASNPATITILFPILSPLAEAIHVNPLHILLPSTLCTSFAFLLPVANPPNAIVFSYGHLKVIDMVKAGLGVNILGVAVVMLGMFTWIEPMFNLHEYPSWAPDIVNQTMP</sequence>
<accession>Q07782</accession>
<dbReference type="EMBL" id="L19102">
    <property type="protein sequence ID" value="AAA41677.1"/>
    <property type="molecule type" value="mRNA"/>
</dbReference>
<dbReference type="EMBL" id="U08031">
    <property type="protein sequence ID" value="AAB48989.1"/>
    <property type="molecule type" value="mRNA"/>
</dbReference>
<dbReference type="PIR" id="A47714">
    <property type="entry name" value="A47714"/>
</dbReference>
<dbReference type="RefSeq" id="NP_113839.1">
    <property type="nucleotide sequence ID" value="NM_031651.2"/>
</dbReference>
<dbReference type="SMR" id="Q07782"/>
<dbReference type="FunCoup" id="Q07782">
    <property type="interactions" value="785"/>
</dbReference>
<dbReference type="STRING" id="10116.ENSRNOP00000010788"/>
<dbReference type="TCDB" id="2.A.47.1.2">
    <property type="family name" value="the divalent anion:na(+) symporter (dass) family"/>
</dbReference>
<dbReference type="GlyCosmos" id="Q07782">
    <property type="glycosylation" value="2 sites, No reported glycans"/>
</dbReference>
<dbReference type="GlyGen" id="Q07782">
    <property type="glycosylation" value="2 sites"/>
</dbReference>
<dbReference type="PhosphoSitePlus" id="Q07782"/>
<dbReference type="PaxDb" id="10116-ENSRNOP00000010788"/>
<dbReference type="Ensembl" id="ENSRNOT00000010788.5">
    <property type="protein sequence ID" value="ENSRNOP00000010788.3"/>
    <property type="gene ID" value="ENSRNOG00000008121.8"/>
</dbReference>
<dbReference type="GeneID" id="58980"/>
<dbReference type="KEGG" id="rno:58980"/>
<dbReference type="UCSC" id="RGD:61919">
    <property type="organism name" value="rat"/>
</dbReference>
<dbReference type="AGR" id="RGD:61919"/>
<dbReference type="CTD" id="6561"/>
<dbReference type="RGD" id="61919">
    <property type="gene designation" value="Slc13a1"/>
</dbReference>
<dbReference type="eggNOG" id="KOG1281">
    <property type="taxonomic scope" value="Eukaryota"/>
</dbReference>
<dbReference type="GeneTree" id="ENSGT01030000234550"/>
<dbReference type="HOGENOM" id="CLU_005170_9_1_1"/>
<dbReference type="InParanoid" id="Q07782"/>
<dbReference type="OMA" id="THIMAHT"/>
<dbReference type="OrthoDB" id="6493944at2759"/>
<dbReference type="PhylomeDB" id="Q07782"/>
<dbReference type="TreeFam" id="TF312913"/>
<dbReference type="Reactome" id="R-RNO-433137">
    <property type="pathway name" value="Sodium-coupled sulphate, di- and tri-carboxylate transporters"/>
</dbReference>
<dbReference type="PRO" id="PR:Q07782"/>
<dbReference type="Proteomes" id="UP000002494">
    <property type="component" value="Chromosome 4"/>
</dbReference>
<dbReference type="Bgee" id="ENSRNOG00000008121">
    <property type="expression patterns" value="Expressed in duodenum and 9 other cell types or tissues"/>
</dbReference>
<dbReference type="GO" id="GO:0016324">
    <property type="term" value="C:apical plasma membrane"/>
    <property type="evidence" value="ECO:0000314"/>
    <property type="project" value="UniProtKB"/>
</dbReference>
<dbReference type="GO" id="GO:0005886">
    <property type="term" value="C:plasma membrane"/>
    <property type="evidence" value="ECO:0000318"/>
    <property type="project" value="GO_Central"/>
</dbReference>
<dbReference type="GO" id="GO:0015373">
    <property type="term" value="F:monoatomic anion:sodium symporter activity"/>
    <property type="evidence" value="ECO:0000314"/>
    <property type="project" value="UniProtKB"/>
</dbReference>
<dbReference type="GO" id="GO:0008271">
    <property type="term" value="F:secondary active sulfate transmembrane transporter activity"/>
    <property type="evidence" value="ECO:0000266"/>
    <property type="project" value="RGD"/>
</dbReference>
<dbReference type="GO" id="GO:0015382">
    <property type="term" value="F:sodium:sulfate symporter activity"/>
    <property type="evidence" value="ECO:0000314"/>
    <property type="project" value="UniProtKB"/>
</dbReference>
<dbReference type="GO" id="GO:0006814">
    <property type="term" value="P:sodium ion transport"/>
    <property type="evidence" value="ECO:0000314"/>
    <property type="project" value="RGD"/>
</dbReference>
<dbReference type="GO" id="GO:1902358">
    <property type="term" value="P:sulfate transmembrane transport"/>
    <property type="evidence" value="ECO:0000314"/>
    <property type="project" value="RGD"/>
</dbReference>
<dbReference type="InterPro" id="IPR031312">
    <property type="entry name" value="Na/sul_symport_CS"/>
</dbReference>
<dbReference type="InterPro" id="IPR001898">
    <property type="entry name" value="SLC13A/DASS"/>
</dbReference>
<dbReference type="PANTHER" id="PTHR10283">
    <property type="entry name" value="SOLUTE CARRIER FAMILY 13 MEMBER"/>
    <property type="match status" value="1"/>
</dbReference>
<dbReference type="PANTHER" id="PTHR10283:SF65">
    <property type="entry name" value="SOLUTE CARRIER FAMILY 13 MEMBER 1"/>
    <property type="match status" value="1"/>
</dbReference>
<dbReference type="Pfam" id="PF00939">
    <property type="entry name" value="Na_sulph_symp"/>
    <property type="match status" value="1"/>
</dbReference>
<dbReference type="PROSITE" id="PS01271">
    <property type="entry name" value="NA_SULFATE"/>
    <property type="match status" value="1"/>
</dbReference>
<name>S13A1_RAT</name>
<evidence type="ECO:0000255" key="1"/>
<evidence type="ECO:0000256" key="2">
    <source>
        <dbReference type="SAM" id="MobiDB-lite"/>
    </source>
</evidence>
<evidence type="ECO:0000269" key="3">
    <source>
    </source>
</evidence>
<evidence type="ECO:0000269" key="4">
    <source>
    </source>
</evidence>
<evidence type="ECO:0000269" key="5">
    <source>
    </source>
</evidence>
<evidence type="ECO:0000269" key="6">
    <source>
    </source>
</evidence>
<evidence type="ECO:0000269" key="7">
    <source>
    </source>
</evidence>
<evidence type="ECO:0000305" key="8"/>
<comment type="function">
    <text evidence="3 4 5 6">Sodium:sulfate symporter that mediates sulfate reabsorption in the kidney and small intestine (PubMed:7690140, PubMed:7816544, PubMed:8175644, PubMed:8300634). Can also mediate the transport of selenate and thiosulfate (PubMed:8175644, PubMed:8300634).</text>
</comment>
<comment type="catalytic activity">
    <reaction evidence="3 4 5">
        <text>sulfate(out) + 3 Na(+)(out) = sulfate(in) + 3 Na(+)(in)</text>
        <dbReference type="Rhea" id="RHEA:71951"/>
        <dbReference type="ChEBI" id="CHEBI:16189"/>
        <dbReference type="ChEBI" id="CHEBI:29101"/>
    </reaction>
</comment>
<comment type="catalytic activity">
    <reaction evidence="5">
        <text>selenate(out) + 3 Na(+)(out) = selenate(in) + 3 Na(+)(in)</text>
        <dbReference type="Rhea" id="RHEA:72079"/>
        <dbReference type="ChEBI" id="CHEBI:15075"/>
        <dbReference type="ChEBI" id="CHEBI:29101"/>
    </reaction>
</comment>
<comment type="catalytic activity">
    <reaction evidence="5 6">
        <text>thiosulfate(out) + 3 Na(+)(out) = thiosulfate(in) + 3 Na(+)(in)</text>
        <dbReference type="Rhea" id="RHEA:72323"/>
        <dbReference type="ChEBI" id="CHEBI:29101"/>
        <dbReference type="ChEBI" id="CHEBI:33542"/>
    </reaction>
</comment>
<comment type="biophysicochemical properties">
    <kinetics>
        <KM evidence="3">0.62 mM for sulfate</KM>
        <KM evidence="4">0.28 mM for sulfate</KM>
        <KM evidence="6">0.6 mM for sulfate</KM>
        <KM evidence="5">0.09 mM for sulfate</KM>
        <KM evidence="5">0.58 mM for selenate</KM>
        <KM evidence="5">0.08 mM for thiosulfate</KM>
        <KM evidence="3">16.8 mM for sodium</KM>
        <KM evidence="4">22.2 mM for sodium</KM>
        <KM evidence="6">33.8 mM for sodium</KM>
    </kinetics>
    <phDependence>
        <text evidence="4">Optimum pH is 6.5-8.</text>
    </phDependence>
</comment>
<comment type="subcellular location">
    <subcellularLocation>
        <location evidence="7">Apical cell membrane</location>
        <topology evidence="1">Multi-pass membrane protein</topology>
    </subcellularLocation>
</comment>
<comment type="tissue specificity">
    <text evidence="3 4 6 7">Kidney and intestine.</text>
</comment>
<comment type="similarity">
    <text evidence="8">Belongs to the SLC13A/DASS transporter (TC 2.A.47) family. NADC subfamily.</text>
</comment>
<protein>
    <recommendedName>
        <fullName>Solute carrier family 13 member 1</fullName>
    </recommendedName>
    <alternativeName>
        <fullName>NaSi-1</fullName>
    </alternativeName>
    <alternativeName>
        <fullName>Renal sodium/sulfate cotransporter</fullName>
        <shortName>Na(+)/sulfate cotransporter</shortName>
    </alternativeName>
</protein>
<reference key="1">
    <citation type="journal article" date="1993" name="Proc. Natl. Acad. Sci. U.S.A.">
        <title>Expression cloning of rat renal Na+/SO4(2-) cotransport.</title>
        <authorList>
            <person name="Markovich D."/>
            <person name="Forgo J."/>
            <person name="Stange G."/>
            <person name="Biber J."/>
            <person name="Murer H."/>
        </authorList>
    </citation>
    <scope>NUCLEOTIDE SEQUENCE [MRNA]</scope>
    <scope>FUNCTION</scope>
    <scope>TRANSPORTER ACTIVITY</scope>
    <scope>BIOPHYSICOCHEMICAL PROPERTIES</scope>
    <scope>TISSUE SPECIFICITY</scope>
    <source>
        <tissue>Kidney cortex</tissue>
    </source>
</reference>
<reference key="2">
    <citation type="journal article" date="1994" name="Pflugers Arch.">
        <title>cDNA cloning of a rat small-intestinal Na+/SO4(2-) cotransporter.</title>
        <authorList>
            <person name="Norbis F."/>
            <person name="Perego C."/>
            <person name="Markovich D."/>
            <person name="Stange G."/>
            <person name="Verri T."/>
            <person name="Murer H."/>
        </authorList>
    </citation>
    <scope>NUCLEOTIDE SEQUENCE [MRNA]</scope>
    <scope>FUNCTION</scope>
    <scope>TRANSPORTER ACTIVITY</scope>
    <scope>BIOPHYSICOCHEMICAL PROPERTIES</scope>
    <source>
        <tissue>Small intestine</tissue>
    </source>
</reference>
<reference key="3">
    <citation type="journal article" date="1994" name="J. Biol. Chem.">
        <title>Expression of rat renal sulfate transport systems in Xenopus laevis oocytes. Functional characterization and molecular identification.</title>
        <authorList>
            <person name="Markovich D."/>
            <person name="Bissig M."/>
            <person name="Sorribas V."/>
            <person name="Hagenbuch B."/>
            <person name="Meier P.J."/>
            <person name="Murer H."/>
        </authorList>
    </citation>
    <scope>FUNCTION</scope>
    <scope>TRANSPORTER ACTIVITY</scope>
    <scope>BIOPHYSICOCHEMICAL PROPERTIES</scope>
    <scope>TISSUE SPECIFICITY</scope>
</reference>
<reference key="4">
    <citation type="journal article" date="1994" name="J. Biol. Chem.">
        <title>Electrogenic cotransport of Na+ and sulfate in Xenopus oocytes expressing the cloned Na+SO4(2-) transport protein NaSi-1.</title>
        <authorList>
            <person name="Busch A.E."/>
            <person name="Waldegger S."/>
            <person name="Herzer T."/>
            <person name="Biber J."/>
            <person name="Markovich D."/>
            <person name="Murer H."/>
            <person name="Lang F."/>
        </authorList>
    </citation>
    <scope>FUNCTION</scope>
    <scope>TRANSPORTER ACTIVITY</scope>
    <scope>BIOPHYSICOCHEMICAL PROPERTIES</scope>
</reference>
<reference key="5">
    <citation type="journal article" date="1996" name="Pflugers Arch.">
        <title>Immunolocalization of Na/SO4-cotransport (NaSi-1) in rat kidney.</title>
        <authorList>
            <person name="Loetscher M."/>
            <person name="Custer M."/>
            <person name="Quabius E.S."/>
            <person name="Kaissling B."/>
            <person name="Murer H."/>
            <person name="Biber J."/>
        </authorList>
    </citation>
    <scope>SUBCELLULAR LOCATION</scope>
    <scope>TISSUE SPECIFICITY</scope>
</reference>
<gene>
    <name type="primary">Slc13a1</name>
    <name type="synonym">Nas1</name>
    <name type="synonym">Nasi1</name>
</gene>
<keyword id="KW-1003">Cell membrane</keyword>
<keyword id="KW-0325">Glycoprotein</keyword>
<keyword id="KW-0406">Ion transport</keyword>
<keyword id="KW-0472">Membrane</keyword>
<keyword id="KW-1185">Reference proteome</keyword>
<keyword id="KW-0915">Sodium</keyword>
<keyword id="KW-0739">Sodium transport</keyword>
<keyword id="KW-0764">Sulfate transport</keyword>
<keyword id="KW-0769">Symport</keyword>
<keyword id="KW-0812">Transmembrane</keyword>
<keyword id="KW-1133">Transmembrane helix</keyword>
<keyword id="KW-0813">Transport</keyword>
<organism>
    <name type="scientific">Rattus norvegicus</name>
    <name type="common">Rat</name>
    <dbReference type="NCBI Taxonomy" id="10116"/>
    <lineage>
        <taxon>Eukaryota</taxon>
        <taxon>Metazoa</taxon>
        <taxon>Chordata</taxon>
        <taxon>Craniata</taxon>
        <taxon>Vertebrata</taxon>
        <taxon>Euteleostomi</taxon>
        <taxon>Mammalia</taxon>
        <taxon>Eutheria</taxon>
        <taxon>Euarchontoglires</taxon>
        <taxon>Glires</taxon>
        <taxon>Rodentia</taxon>
        <taxon>Myomorpha</taxon>
        <taxon>Muroidea</taxon>
        <taxon>Muridae</taxon>
        <taxon>Murinae</taxon>
        <taxon>Rattus</taxon>
    </lineage>
</organism>